<dbReference type="EC" id="2.7.8.26" evidence="1"/>
<dbReference type="EMBL" id="CP001638">
    <property type="protein sequence ID" value="ACS24915.1"/>
    <property type="molecule type" value="Genomic_DNA"/>
</dbReference>
<dbReference type="STRING" id="471223.GWCH70_2206"/>
<dbReference type="KEGG" id="gwc:GWCH70_2206"/>
<dbReference type="eggNOG" id="COG0368">
    <property type="taxonomic scope" value="Bacteria"/>
</dbReference>
<dbReference type="HOGENOM" id="CLU_057426_1_2_9"/>
<dbReference type="OrthoDB" id="9794626at2"/>
<dbReference type="UniPathway" id="UPA00148">
    <property type="reaction ID" value="UER00238"/>
</dbReference>
<dbReference type="GO" id="GO:0005886">
    <property type="term" value="C:plasma membrane"/>
    <property type="evidence" value="ECO:0007669"/>
    <property type="project" value="UniProtKB-SubCell"/>
</dbReference>
<dbReference type="GO" id="GO:0051073">
    <property type="term" value="F:adenosylcobinamide-GDP ribazoletransferase activity"/>
    <property type="evidence" value="ECO:0007669"/>
    <property type="project" value="UniProtKB-UniRule"/>
</dbReference>
<dbReference type="GO" id="GO:0008818">
    <property type="term" value="F:cobalamin 5'-phosphate synthase activity"/>
    <property type="evidence" value="ECO:0007669"/>
    <property type="project" value="UniProtKB-UniRule"/>
</dbReference>
<dbReference type="GO" id="GO:0009236">
    <property type="term" value="P:cobalamin biosynthetic process"/>
    <property type="evidence" value="ECO:0007669"/>
    <property type="project" value="UniProtKB-UniRule"/>
</dbReference>
<dbReference type="HAMAP" id="MF_00719">
    <property type="entry name" value="CobS"/>
    <property type="match status" value="1"/>
</dbReference>
<dbReference type="InterPro" id="IPR003805">
    <property type="entry name" value="CobS"/>
</dbReference>
<dbReference type="NCBIfam" id="TIGR00317">
    <property type="entry name" value="cobS"/>
    <property type="match status" value="1"/>
</dbReference>
<dbReference type="PANTHER" id="PTHR34148">
    <property type="entry name" value="ADENOSYLCOBINAMIDE-GDP RIBAZOLETRANSFERASE"/>
    <property type="match status" value="1"/>
</dbReference>
<dbReference type="PANTHER" id="PTHR34148:SF1">
    <property type="entry name" value="ADENOSYLCOBINAMIDE-GDP RIBAZOLETRANSFERASE"/>
    <property type="match status" value="1"/>
</dbReference>
<dbReference type="Pfam" id="PF02654">
    <property type="entry name" value="CobS"/>
    <property type="match status" value="1"/>
</dbReference>
<name>COBS_GEOSW</name>
<accession>C5D3K0</accession>
<evidence type="ECO:0000255" key="1">
    <source>
        <dbReference type="HAMAP-Rule" id="MF_00719"/>
    </source>
</evidence>
<protein>
    <recommendedName>
        <fullName evidence="1">Adenosylcobinamide-GDP ribazoletransferase</fullName>
        <ecNumber evidence="1">2.7.8.26</ecNumber>
    </recommendedName>
    <alternativeName>
        <fullName evidence="1">Cobalamin synthase</fullName>
    </alternativeName>
    <alternativeName>
        <fullName evidence="1">Cobalamin-5'-phosphate synthase</fullName>
    </alternativeName>
</protein>
<reference key="1">
    <citation type="submission" date="2009-06" db="EMBL/GenBank/DDBJ databases">
        <title>Complete sequence of chromosome of Geopacillus sp. WCH70.</title>
        <authorList>
            <consortium name="US DOE Joint Genome Institute"/>
            <person name="Lucas S."/>
            <person name="Copeland A."/>
            <person name="Lapidus A."/>
            <person name="Glavina del Rio T."/>
            <person name="Dalin E."/>
            <person name="Tice H."/>
            <person name="Bruce D."/>
            <person name="Goodwin L."/>
            <person name="Pitluck S."/>
            <person name="Chertkov O."/>
            <person name="Brettin T."/>
            <person name="Detter J.C."/>
            <person name="Han C."/>
            <person name="Larimer F."/>
            <person name="Land M."/>
            <person name="Hauser L."/>
            <person name="Kyrpides N."/>
            <person name="Mikhailova N."/>
            <person name="Brumm P."/>
            <person name="Mead D.A."/>
            <person name="Richardson P."/>
        </authorList>
    </citation>
    <scope>NUCLEOTIDE SEQUENCE [LARGE SCALE GENOMIC DNA]</scope>
    <source>
        <strain>WCH70</strain>
    </source>
</reference>
<comment type="function">
    <text evidence="1">Joins adenosylcobinamide-GDP and alpha-ribazole to generate adenosylcobalamin (Ado-cobalamin). Also synthesizes adenosylcobalamin 5'-phosphate from adenosylcobinamide-GDP and alpha-ribazole 5'-phosphate.</text>
</comment>
<comment type="catalytic activity">
    <reaction evidence="1">
        <text>alpha-ribazole + adenosylcob(III)inamide-GDP = adenosylcob(III)alamin + GMP + H(+)</text>
        <dbReference type="Rhea" id="RHEA:16049"/>
        <dbReference type="ChEBI" id="CHEBI:10329"/>
        <dbReference type="ChEBI" id="CHEBI:15378"/>
        <dbReference type="ChEBI" id="CHEBI:18408"/>
        <dbReference type="ChEBI" id="CHEBI:58115"/>
        <dbReference type="ChEBI" id="CHEBI:60487"/>
        <dbReference type="EC" id="2.7.8.26"/>
    </reaction>
</comment>
<comment type="catalytic activity">
    <reaction evidence="1">
        <text>alpha-ribazole 5'-phosphate + adenosylcob(III)inamide-GDP = adenosylcob(III)alamin 5'-phosphate + GMP + H(+)</text>
        <dbReference type="Rhea" id="RHEA:23560"/>
        <dbReference type="ChEBI" id="CHEBI:15378"/>
        <dbReference type="ChEBI" id="CHEBI:57918"/>
        <dbReference type="ChEBI" id="CHEBI:58115"/>
        <dbReference type="ChEBI" id="CHEBI:60487"/>
        <dbReference type="ChEBI" id="CHEBI:60493"/>
        <dbReference type="EC" id="2.7.8.26"/>
    </reaction>
</comment>
<comment type="cofactor">
    <cofactor evidence="1">
        <name>Mg(2+)</name>
        <dbReference type="ChEBI" id="CHEBI:18420"/>
    </cofactor>
</comment>
<comment type="pathway">
    <text evidence="1">Cofactor biosynthesis; adenosylcobalamin biosynthesis; adenosylcobalamin from cob(II)yrinate a,c-diamide: step 7/7.</text>
</comment>
<comment type="subcellular location">
    <subcellularLocation>
        <location evidence="1">Cell membrane</location>
        <topology evidence="1">Multi-pass membrane protein</topology>
    </subcellularLocation>
</comment>
<comment type="similarity">
    <text evidence="1">Belongs to the CobS family.</text>
</comment>
<gene>
    <name evidence="1" type="primary">cobS</name>
    <name type="ordered locus">GWCH70_2206</name>
</gene>
<organism>
    <name type="scientific">Geobacillus sp. (strain WCH70)</name>
    <dbReference type="NCBI Taxonomy" id="471223"/>
    <lineage>
        <taxon>Bacteria</taxon>
        <taxon>Bacillati</taxon>
        <taxon>Bacillota</taxon>
        <taxon>Bacilli</taxon>
        <taxon>Bacillales</taxon>
        <taxon>Anoxybacillaceae</taxon>
        <taxon>Geobacillus</taxon>
    </lineage>
</organism>
<proteinExistence type="inferred from homology"/>
<feature type="chain" id="PRO_1000212692" description="Adenosylcobinamide-GDP ribazoletransferase">
    <location>
        <begin position="1"/>
        <end position="262"/>
    </location>
</feature>
<feature type="transmembrane region" description="Helical" evidence="1">
    <location>
        <begin position="4"/>
        <end position="21"/>
    </location>
</feature>
<feature type="transmembrane region" description="Helical" evidence="1">
    <location>
        <begin position="37"/>
        <end position="57"/>
    </location>
</feature>
<feature type="transmembrane region" description="Helical" evidence="1">
    <location>
        <begin position="62"/>
        <end position="82"/>
    </location>
</feature>
<feature type="transmembrane region" description="Helical" evidence="1">
    <location>
        <begin position="112"/>
        <end position="132"/>
    </location>
</feature>
<feature type="transmembrane region" description="Helical" evidence="1">
    <location>
        <begin position="141"/>
        <end position="161"/>
    </location>
</feature>
<feature type="transmembrane region" description="Helical" evidence="1">
    <location>
        <begin position="181"/>
        <end position="201"/>
    </location>
</feature>
<feature type="transmembrane region" description="Helical" evidence="1">
    <location>
        <begin position="202"/>
        <end position="222"/>
    </location>
</feature>
<feature type="transmembrane region" description="Helical" evidence="1">
    <location>
        <begin position="236"/>
        <end position="256"/>
    </location>
</feature>
<keyword id="KW-1003">Cell membrane</keyword>
<keyword id="KW-0169">Cobalamin biosynthesis</keyword>
<keyword id="KW-0460">Magnesium</keyword>
<keyword id="KW-0472">Membrane</keyword>
<keyword id="KW-0808">Transferase</keyword>
<keyword id="KW-0812">Transmembrane</keyword>
<keyword id="KW-1133">Transmembrane helix</keyword>
<sequence>MKAAWSGFLLSVQFLTVIPIRKQIDWNAATARWSVRAFPLVGALIGVIEAVTYFIFSSFSSLSPLFLALSLMWLSIWIAGGLHADGWMDVSDAFFSYRDIKRRQEIMSDSRVGAFAVLSILCLLSFRFLFVFETIRSHLDIFLISVIPLLSRTAMAWLLIYGKPAKQTGMAAAFREHADRYDAHVAMIIGNCLLACLCAIHFSVWKTVIFLACGTIFAVFVARLFFEKQFGGITGDALGAFVEGVETWLWCMIWLLRSYVMV</sequence>